<proteinExistence type="evidence at transcript level"/>
<organism>
    <name type="scientific">Arabidopsis thaliana</name>
    <name type="common">Mouse-ear cress</name>
    <dbReference type="NCBI Taxonomy" id="3702"/>
    <lineage>
        <taxon>Eukaryota</taxon>
        <taxon>Viridiplantae</taxon>
        <taxon>Streptophyta</taxon>
        <taxon>Embryophyta</taxon>
        <taxon>Tracheophyta</taxon>
        <taxon>Spermatophyta</taxon>
        <taxon>Magnoliopsida</taxon>
        <taxon>eudicotyledons</taxon>
        <taxon>Gunneridae</taxon>
        <taxon>Pentapetalae</taxon>
        <taxon>rosids</taxon>
        <taxon>malvids</taxon>
        <taxon>Brassicales</taxon>
        <taxon>Brassicaceae</taxon>
        <taxon>Camelineae</taxon>
        <taxon>Arabidopsis</taxon>
    </lineage>
</organism>
<keyword id="KW-0032">Aminotransferase</keyword>
<keyword id="KW-0663">Pyridoxal phosphate</keyword>
<keyword id="KW-1185">Reference proteome</keyword>
<keyword id="KW-0808">Transferase</keyword>
<reference key="1">
    <citation type="journal article" date="1997" name="DNA Res.">
        <title>Structural analysis of Arabidopsis thaliana chromosome 5. III. Sequence features of the regions of 1,191,918 bp covered by seventeen physically assigned P1 clones.</title>
        <authorList>
            <person name="Nakamura Y."/>
            <person name="Sato S."/>
            <person name="Kaneko T."/>
            <person name="Kotani H."/>
            <person name="Asamizu E."/>
            <person name="Miyajima N."/>
            <person name="Tabata S."/>
        </authorList>
    </citation>
    <scope>NUCLEOTIDE SEQUENCE [LARGE SCALE GENOMIC DNA]</scope>
    <source>
        <strain>cv. Columbia</strain>
    </source>
</reference>
<reference key="2">
    <citation type="journal article" date="2017" name="Plant J.">
        <title>Araport11: a complete reannotation of the Arabidopsis thaliana reference genome.</title>
        <authorList>
            <person name="Cheng C.Y."/>
            <person name="Krishnakumar V."/>
            <person name="Chan A.P."/>
            <person name="Thibaud-Nissen F."/>
            <person name="Schobel S."/>
            <person name="Town C.D."/>
        </authorList>
    </citation>
    <scope>GENOME REANNOTATION</scope>
    <source>
        <strain>cv. Columbia</strain>
    </source>
</reference>
<reference key="3">
    <citation type="journal article" date="2003" name="Science">
        <title>Empirical analysis of transcriptional activity in the Arabidopsis genome.</title>
        <authorList>
            <person name="Yamada K."/>
            <person name="Lim J."/>
            <person name="Dale J.M."/>
            <person name="Chen H."/>
            <person name="Shinn P."/>
            <person name="Palm C.J."/>
            <person name="Southwick A.M."/>
            <person name="Wu H.C."/>
            <person name="Kim C.J."/>
            <person name="Nguyen M."/>
            <person name="Pham P.K."/>
            <person name="Cheuk R.F."/>
            <person name="Karlin-Newmann G."/>
            <person name="Liu S.X."/>
            <person name="Lam B."/>
            <person name="Sakano H."/>
            <person name="Wu T."/>
            <person name="Yu G."/>
            <person name="Miranda M."/>
            <person name="Quach H.L."/>
            <person name="Tripp M."/>
            <person name="Chang C.H."/>
            <person name="Lee J.M."/>
            <person name="Toriumi M.J."/>
            <person name="Chan M.M."/>
            <person name="Tang C.C."/>
            <person name="Onodera C.S."/>
            <person name="Deng J.M."/>
            <person name="Akiyama K."/>
            <person name="Ansari Y."/>
            <person name="Arakawa T."/>
            <person name="Banh J."/>
            <person name="Banno F."/>
            <person name="Bowser L."/>
            <person name="Brooks S.Y."/>
            <person name="Carninci P."/>
            <person name="Chao Q."/>
            <person name="Choy N."/>
            <person name="Enju A."/>
            <person name="Goldsmith A.D."/>
            <person name="Gurjal M."/>
            <person name="Hansen N.F."/>
            <person name="Hayashizaki Y."/>
            <person name="Johnson-Hopson C."/>
            <person name="Hsuan V.W."/>
            <person name="Iida K."/>
            <person name="Karnes M."/>
            <person name="Khan S."/>
            <person name="Koesema E."/>
            <person name="Ishida J."/>
            <person name="Jiang P.X."/>
            <person name="Jones T."/>
            <person name="Kawai J."/>
            <person name="Kamiya A."/>
            <person name="Meyers C."/>
            <person name="Nakajima M."/>
            <person name="Narusaka M."/>
            <person name="Seki M."/>
            <person name="Sakurai T."/>
            <person name="Satou M."/>
            <person name="Tamse R."/>
            <person name="Vaysberg M."/>
            <person name="Wallender E.K."/>
            <person name="Wong C."/>
            <person name="Yamamura Y."/>
            <person name="Yuan S."/>
            <person name="Shinozaki K."/>
            <person name="Davis R.W."/>
            <person name="Theologis A."/>
            <person name="Ecker J.R."/>
        </authorList>
    </citation>
    <scope>NUCLEOTIDE SEQUENCE [LARGE SCALE MRNA]</scope>
    <source>
        <strain>cv. Columbia</strain>
    </source>
</reference>
<reference key="4">
    <citation type="journal article" date="2005" name="J. Plant Physiol.">
        <title>Tocopherol content and activities of tyrosine aminotransferase and cystine lyase in Arabidopsis under stress conditions.</title>
        <authorList>
            <person name="Hollaender-Czytko H."/>
            <person name="Grabowski J."/>
            <person name="Sandorf I."/>
            <person name="Weckermann K."/>
            <person name="Weiler E.W."/>
        </authorList>
    </citation>
    <scope>INDUCTION BY CORONATINE</scope>
</reference>
<evidence type="ECO:0000250" key="1"/>
<evidence type="ECO:0000269" key="2">
    <source>
    </source>
</evidence>
<evidence type="ECO:0000305" key="3"/>
<name>TAT2_ARATH</name>
<feature type="chain" id="PRO_0000412726" description="Probable aminotransferase TAT2">
    <location>
        <begin position="1"/>
        <end position="414"/>
    </location>
</feature>
<feature type="sequence conflict" description="In Ref. 3; AAN31921." evidence="3" ref="3">
    <original>P</original>
    <variation>H</variation>
    <location>
        <position position="73"/>
    </location>
</feature>
<protein>
    <recommendedName>
        <fullName>Probable aminotransferase TAT2</fullName>
        <ecNumber>2.6.1.-</ecNumber>
    </recommendedName>
    <alternativeName>
        <fullName>Tyrosine aminotransferase 2</fullName>
    </alternativeName>
</protein>
<gene>
    <name type="ordered locus">At5g53970</name>
    <name type="ORF">K19P17.14</name>
</gene>
<dbReference type="EC" id="2.6.1.-"/>
<dbReference type="EMBL" id="AB007644">
    <property type="protein sequence ID" value="BAB10727.1"/>
    <property type="molecule type" value="Genomic_DNA"/>
</dbReference>
<dbReference type="EMBL" id="CP002688">
    <property type="protein sequence ID" value="AED96434.1"/>
    <property type="molecule type" value="Genomic_DNA"/>
</dbReference>
<dbReference type="EMBL" id="BT000782">
    <property type="protein sequence ID" value="AAN31921.1"/>
    <property type="molecule type" value="mRNA"/>
</dbReference>
<dbReference type="EMBL" id="BT001912">
    <property type="protein sequence ID" value="AAN71911.1"/>
    <property type="molecule type" value="mRNA"/>
</dbReference>
<dbReference type="RefSeq" id="NP_200208.1">
    <property type="nucleotide sequence ID" value="NM_124776.5"/>
</dbReference>
<dbReference type="SMR" id="Q9FN30"/>
<dbReference type="FunCoup" id="Q9FN30">
    <property type="interactions" value="343"/>
</dbReference>
<dbReference type="STRING" id="3702.Q9FN30"/>
<dbReference type="PaxDb" id="3702-AT5G53970.1"/>
<dbReference type="ProteomicsDB" id="234260"/>
<dbReference type="EnsemblPlants" id="AT5G53970.1">
    <property type="protein sequence ID" value="AT5G53970.1"/>
    <property type="gene ID" value="AT5G53970"/>
</dbReference>
<dbReference type="GeneID" id="835480"/>
<dbReference type="Gramene" id="AT5G53970.1">
    <property type="protein sequence ID" value="AT5G53970.1"/>
    <property type="gene ID" value="AT5G53970"/>
</dbReference>
<dbReference type="KEGG" id="ath:AT5G53970"/>
<dbReference type="Araport" id="AT5G53970"/>
<dbReference type="TAIR" id="AT5G53970">
    <property type="gene designation" value="TAT7"/>
</dbReference>
<dbReference type="eggNOG" id="KOG0259">
    <property type="taxonomic scope" value="Eukaryota"/>
</dbReference>
<dbReference type="HOGENOM" id="CLU_017584_4_2_1"/>
<dbReference type="InParanoid" id="Q9FN30"/>
<dbReference type="OMA" id="MIKASEF"/>
<dbReference type="PhylomeDB" id="Q9FN30"/>
<dbReference type="BioCyc" id="ARA:AT5G53970-MONOMER"/>
<dbReference type="BRENDA" id="2.6.1.5">
    <property type="organism ID" value="399"/>
</dbReference>
<dbReference type="PRO" id="PR:Q9FN30"/>
<dbReference type="Proteomes" id="UP000006548">
    <property type="component" value="Chromosome 5"/>
</dbReference>
<dbReference type="ExpressionAtlas" id="Q9FN30">
    <property type="expression patterns" value="baseline and differential"/>
</dbReference>
<dbReference type="GO" id="GO:0005829">
    <property type="term" value="C:cytosol"/>
    <property type="evidence" value="ECO:0000314"/>
    <property type="project" value="TAIR"/>
</dbReference>
<dbReference type="GO" id="GO:0004838">
    <property type="term" value="F:L-tyrosine-2-oxoglutarate transaminase activity"/>
    <property type="evidence" value="ECO:0000314"/>
    <property type="project" value="TAIR"/>
</dbReference>
<dbReference type="GO" id="GO:0030170">
    <property type="term" value="F:pyridoxal phosphate binding"/>
    <property type="evidence" value="ECO:0007669"/>
    <property type="project" value="InterPro"/>
</dbReference>
<dbReference type="GO" id="GO:0006572">
    <property type="term" value="P:tyrosine catabolic process"/>
    <property type="evidence" value="ECO:0000314"/>
    <property type="project" value="TAIR"/>
</dbReference>
<dbReference type="GO" id="GO:0010189">
    <property type="term" value="P:vitamin E biosynthetic process"/>
    <property type="evidence" value="ECO:0000315"/>
    <property type="project" value="TAIR"/>
</dbReference>
<dbReference type="CDD" id="cd00609">
    <property type="entry name" value="AAT_like"/>
    <property type="match status" value="1"/>
</dbReference>
<dbReference type="FunFam" id="3.90.1150.10:FF:000040">
    <property type="entry name" value="Tyrosine aminotransferase"/>
    <property type="match status" value="1"/>
</dbReference>
<dbReference type="FunFam" id="3.40.640.10:FF:000048">
    <property type="entry name" value="tyrosine aminotransferase"/>
    <property type="match status" value="1"/>
</dbReference>
<dbReference type="Gene3D" id="3.90.1150.10">
    <property type="entry name" value="Aspartate Aminotransferase, domain 1"/>
    <property type="match status" value="1"/>
</dbReference>
<dbReference type="Gene3D" id="3.40.640.10">
    <property type="entry name" value="Type I PLP-dependent aspartate aminotransferase-like (Major domain)"/>
    <property type="match status" value="1"/>
</dbReference>
<dbReference type="InterPro" id="IPR004839">
    <property type="entry name" value="Aminotransferase_I/II_large"/>
</dbReference>
<dbReference type="InterPro" id="IPR015424">
    <property type="entry name" value="PyrdxlP-dep_Trfase"/>
</dbReference>
<dbReference type="InterPro" id="IPR015421">
    <property type="entry name" value="PyrdxlP-dep_Trfase_major"/>
</dbReference>
<dbReference type="InterPro" id="IPR015422">
    <property type="entry name" value="PyrdxlP-dep_Trfase_small"/>
</dbReference>
<dbReference type="InterPro" id="IPR005958">
    <property type="entry name" value="TyrNic_aminoTrfase"/>
</dbReference>
<dbReference type="NCBIfam" id="TIGR01265">
    <property type="entry name" value="tyr_nico_aTase"/>
    <property type="match status" value="1"/>
</dbReference>
<dbReference type="PANTHER" id="PTHR45744">
    <property type="entry name" value="TYROSINE AMINOTRANSFERASE"/>
    <property type="match status" value="1"/>
</dbReference>
<dbReference type="PANTHER" id="PTHR45744:SF2">
    <property type="entry name" value="TYROSINE AMINOTRANSFERASE"/>
    <property type="match status" value="1"/>
</dbReference>
<dbReference type="Pfam" id="PF00155">
    <property type="entry name" value="Aminotran_1_2"/>
    <property type="match status" value="1"/>
</dbReference>
<dbReference type="PIRSF" id="PIRSF000517">
    <property type="entry name" value="Tyr_transaminase"/>
    <property type="match status" value="1"/>
</dbReference>
<dbReference type="SUPFAM" id="SSF53383">
    <property type="entry name" value="PLP-dependent transferases"/>
    <property type="match status" value="1"/>
</dbReference>
<accession>Q9FN30</accession>
<accession>Q8H146</accession>
<sequence>MENGATTTSTITIKGILSLLMESITTEEDEGGKRVISLGMGDPTLYSCFRTTQVSLQAVSDSLLSNKFHGYSPTVGLPQARRAIAEYLSRDLPYKLSQDDVFITSGCTQAIDVALSMLARPRANILLPRPGFPIYELCAKFRHLEVRYVDLLPENGWEIDLDAVEALADENTVALVVINPGNPCGNVYSYQHLMKIAESAKKLGFLVIADEVYGHLAFGSKPFVPMGVFGSIVPVLTLGSLSKRWIVPGWRLGWFVTTDPSGSFKDPKIIERFKKYFDILGGPATFIQAAVPTILEQTDESFFKKTLNSLKNSSDICCDWIKEIPCIDSSHRPEGSMAMMVKLNLSLLEDVSDDIDFCFKLAREESVILLPGTAVGLKNWLRITFAADATSIEEAFKRIKCFYLRHAKTQYPTI</sequence>
<comment type="cofactor">
    <cofactor evidence="1">
        <name>pyridoxal 5'-phosphate</name>
        <dbReference type="ChEBI" id="CHEBI:597326"/>
    </cofactor>
</comment>
<comment type="induction">
    <text evidence="2">By coronatine.</text>
</comment>
<comment type="similarity">
    <text evidence="3">Belongs to the class-I pyridoxal-phosphate-dependent aminotransferase family.</text>
</comment>